<comment type="similarity">
    <text evidence="1">Belongs to the UPF0235 family.</text>
</comment>
<name>Y1230_DEHMC</name>
<reference key="1">
    <citation type="journal article" date="2005" name="Nat. Biotechnol.">
        <title>Genome sequence of the chlorinated compound-respiring bacterium Dehalococcoides species strain CBDB1.</title>
        <authorList>
            <person name="Kube M."/>
            <person name="Beck A."/>
            <person name="Zinder S.H."/>
            <person name="Kuhl H."/>
            <person name="Reinhardt R."/>
            <person name="Adrian L."/>
        </authorList>
    </citation>
    <scope>NUCLEOTIDE SEQUENCE [LARGE SCALE GENOMIC DNA]</scope>
    <source>
        <strain>CBDB1</strain>
    </source>
</reference>
<protein>
    <recommendedName>
        <fullName evidence="1">UPF0235 protein cbdbA1230</fullName>
    </recommendedName>
</protein>
<gene>
    <name type="ordered locus">cbdbA1230</name>
</gene>
<sequence>MPPKESPFKVNLKIIPSARKNELAGYENGLLKLKIAAQPEKGKANKELIDYLSDLLDTPKAEIEICHGHTGRNKVLAFFTLSQADFEAKISAALHGS</sequence>
<evidence type="ECO:0000255" key="1">
    <source>
        <dbReference type="HAMAP-Rule" id="MF_00634"/>
    </source>
</evidence>
<accession>Q3ZYH5</accession>
<proteinExistence type="inferred from homology"/>
<dbReference type="EMBL" id="AJ965256">
    <property type="protein sequence ID" value="CAI83299.1"/>
    <property type="molecule type" value="Genomic_DNA"/>
</dbReference>
<dbReference type="RefSeq" id="WP_011309650.1">
    <property type="nucleotide sequence ID" value="NC_007356.1"/>
</dbReference>
<dbReference type="SMR" id="Q3ZYH5"/>
<dbReference type="KEGG" id="deh:cbdbA1230"/>
<dbReference type="HOGENOM" id="CLU_130694_6_2_0"/>
<dbReference type="Proteomes" id="UP000000433">
    <property type="component" value="Chromosome"/>
</dbReference>
<dbReference type="GO" id="GO:0005737">
    <property type="term" value="C:cytoplasm"/>
    <property type="evidence" value="ECO:0007669"/>
    <property type="project" value="TreeGrafter"/>
</dbReference>
<dbReference type="Gene3D" id="3.30.1200.10">
    <property type="entry name" value="YggU-like"/>
    <property type="match status" value="1"/>
</dbReference>
<dbReference type="HAMAP" id="MF_00634">
    <property type="entry name" value="UPF0235"/>
    <property type="match status" value="1"/>
</dbReference>
<dbReference type="InterPro" id="IPR003746">
    <property type="entry name" value="DUF167"/>
</dbReference>
<dbReference type="InterPro" id="IPR036591">
    <property type="entry name" value="YggU-like_sf"/>
</dbReference>
<dbReference type="NCBIfam" id="TIGR00251">
    <property type="entry name" value="DUF167 family protein"/>
    <property type="match status" value="1"/>
</dbReference>
<dbReference type="PANTHER" id="PTHR13420">
    <property type="entry name" value="UPF0235 PROTEIN C15ORF40"/>
    <property type="match status" value="1"/>
</dbReference>
<dbReference type="PANTHER" id="PTHR13420:SF7">
    <property type="entry name" value="UPF0235 PROTEIN C15ORF40"/>
    <property type="match status" value="1"/>
</dbReference>
<dbReference type="Pfam" id="PF02594">
    <property type="entry name" value="DUF167"/>
    <property type="match status" value="1"/>
</dbReference>
<dbReference type="SMART" id="SM01152">
    <property type="entry name" value="DUF167"/>
    <property type="match status" value="1"/>
</dbReference>
<dbReference type="SUPFAM" id="SSF69786">
    <property type="entry name" value="YggU-like"/>
    <property type="match status" value="1"/>
</dbReference>
<feature type="chain" id="PRO_1000072668" description="UPF0235 protein cbdbA1230">
    <location>
        <begin position="1"/>
        <end position="97"/>
    </location>
</feature>
<organism>
    <name type="scientific">Dehalococcoides mccartyi (strain CBDB1)</name>
    <dbReference type="NCBI Taxonomy" id="255470"/>
    <lineage>
        <taxon>Bacteria</taxon>
        <taxon>Bacillati</taxon>
        <taxon>Chloroflexota</taxon>
        <taxon>Dehalococcoidia</taxon>
        <taxon>Dehalococcoidales</taxon>
        <taxon>Dehalococcoidaceae</taxon>
        <taxon>Dehalococcoides</taxon>
    </lineage>
</organism>